<gene>
    <name type="primary">liaF</name>
    <name type="synonym">yvqF</name>
    <name type="ordered locus">BSU33100</name>
</gene>
<protein>
    <recommendedName>
        <fullName>Protein LiaF</fullName>
    </recommendedName>
</protein>
<sequence length="241" mass="27025">MTKKQLLGLIIALFGISMFLQIIGIGDLLFWPLFFLIAGYFLKKYSRDWLGSVMYIFAAFLFLKNLFSITFNLFGYAFAAFLIYAGYRLIKGKPIFEPNEKQVNLNKKEHHEPPKDVKHPDMRSFFIGELQMMKQPFDLNDLNVSGFIGDIKIDLSKAMIPEGESTIVISGVIGNVDIYVPSDLEVAVSSAVFIGDINLIGSKKSGLSTKVYAASTDFSESKRRVKVSVSLFIGDVDVKYV</sequence>
<keyword id="KW-1003">Cell membrane</keyword>
<keyword id="KW-0472">Membrane</keyword>
<keyword id="KW-1185">Reference proteome</keyword>
<keyword id="KW-0812">Transmembrane</keyword>
<keyword id="KW-1133">Transmembrane helix</keyword>
<reference key="1">
    <citation type="journal article" date="1998" name="Microbiology">
        <title>The yvsA-yvqA (293 degrees - 289 degrees) region of the Bacillus subtilis chromosome containing genes involved in metal ion uptake and a putative sigma factor.</title>
        <authorList>
            <person name="Wipat A."/>
            <person name="Brignell C.S."/>
            <person name="Guy J.B."/>
            <person name="Rose M."/>
            <person name="Emmerson P.T."/>
            <person name="Harwood C.R."/>
        </authorList>
    </citation>
    <scope>NUCLEOTIDE SEQUENCE [GENOMIC DNA]</scope>
    <source>
        <strain>168</strain>
    </source>
</reference>
<reference key="2">
    <citation type="journal article" date="1997" name="Nature">
        <title>The complete genome sequence of the Gram-positive bacterium Bacillus subtilis.</title>
        <authorList>
            <person name="Kunst F."/>
            <person name="Ogasawara N."/>
            <person name="Moszer I."/>
            <person name="Albertini A.M."/>
            <person name="Alloni G."/>
            <person name="Azevedo V."/>
            <person name="Bertero M.G."/>
            <person name="Bessieres P."/>
            <person name="Bolotin A."/>
            <person name="Borchert S."/>
            <person name="Borriss R."/>
            <person name="Boursier L."/>
            <person name="Brans A."/>
            <person name="Braun M."/>
            <person name="Brignell S.C."/>
            <person name="Bron S."/>
            <person name="Brouillet S."/>
            <person name="Bruschi C.V."/>
            <person name="Caldwell B."/>
            <person name="Capuano V."/>
            <person name="Carter N.M."/>
            <person name="Choi S.-K."/>
            <person name="Codani J.-J."/>
            <person name="Connerton I.F."/>
            <person name="Cummings N.J."/>
            <person name="Daniel R.A."/>
            <person name="Denizot F."/>
            <person name="Devine K.M."/>
            <person name="Duesterhoeft A."/>
            <person name="Ehrlich S.D."/>
            <person name="Emmerson P.T."/>
            <person name="Entian K.-D."/>
            <person name="Errington J."/>
            <person name="Fabret C."/>
            <person name="Ferrari E."/>
            <person name="Foulger D."/>
            <person name="Fritz C."/>
            <person name="Fujita M."/>
            <person name="Fujita Y."/>
            <person name="Fuma S."/>
            <person name="Galizzi A."/>
            <person name="Galleron N."/>
            <person name="Ghim S.-Y."/>
            <person name="Glaser P."/>
            <person name="Goffeau A."/>
            <person name="Golightly E.J."/>
            <person name="Grandi G."/>
            <person name="Guiseppi G."/>
            <person name="Guy B.J."/>
            <person name="Haga K."/>
            <person name="Haiech J."/>
            <person name="Harwood C.R."/>
            <person name="Henaut A."/>
            <person name="Hilbert H."/>
            <person name="Holsappel S."/>
            <person name="Hosono S."/>
            <person name="Hullo M.-F."/>
            <person name="Itaya M."/>
            <person name="Jones L.-M."/>
            <person name="Joris B."/>
            <person name="Karamata D."/>
            <person name="Kasahara Y."/>
            <person name="Klaerr-Blanchard M."/>
            <person name="Klein C."/>
            <person name="Kobayashi Y."/>
            <person name="Koetter P."/>
            <person name="Koningstein G."/>
            <person name="Krogh S."/>
            <person name="Kumano M."/>
            <person name="Kurita K."/>
            <person name="Lapidus A."/>
            <person name="Lardinois S."/>
            <person name="Lauber J."/>
            <person name="Lazarevic V."/>
            <person name="Lee S.-M."/>
            <person name="Levine A."/>
            <person name="Liu H."/>
            <person name="Masuda S."/>
            <person name="Mauel C."/>
            <person name="Medigue C."/>
            <person name="Medina N."/>
            <person name="Mellado R.P."/>
            <person name="Mizuno M."/>
            <person name="Moestl D."/>
            <person name="Nakai S."/>
            <person name="Noback M."/>
            <person name="Noone D."/>
            <person name="O'Reilly M."/>
            <person name="Ogawa K."/>
            <person name="Ogiwara A."/>
            <person name="Oudega B."/>
            <person name="Park S.-H."/>
            <person name="Parro V."/>
            <person name="Pohl T.M."/>
            <person name="Portetelle D."/>
            <person name="Porwollik S."/>
            <person name="Prescott A.M."/>
            <person name="Presecan E."/>
            <person name="Pujic P."/>
            <person name="Purnelle B."/>
            <person name="Rapoport G."/>
            <person name="Rey M."/>
            <person name="Reynolds S."/>
            <person name="Rieger M."/>
            <person name="Rivolta C."/>
            <person name="Rocha E."/>
            <person name="Roche B."/>
            <person name="Rose M."/>
            <person name="Sadaie Y."/>
            <person name="Sato T."/>
            <person name="Scanlan E."/>
            <person name="Schleich S."/>
            <person name="Schroeter R."/>
            <person name="Scoffone F."/>
            <person name="Sekiguchi J."/>
            <person name="Sekowska A."/>
            <person name="Seror S.J."/>
            <person name="Serror P."/>
            <person name="Shin B.-S."/>
            <person name="Soldo B."/>
            <person name="Sorokin A."/>
            <person name="Tacconi E."/>
            <person name="Takagi T."/>
            <person name="Takahashi H."/>
            <person name="Takemaru K."/>
            <person name="Takeuchi M."/>
            <person name="Tamakoshi A."/>
            <person name="Tanaka T."/>
            <person name="Terpstra P."/>
            <person name="Tognoni A."/>
            <person name="Tosato V."/>
            <person name="Uchiyama S."/>
            <person name="Vandenbol M."/>
            <person name="Vannier F."/>
            <person name="Vassarotti A."/>
            <person name="Viari A."/>
            <person name="Wambutt R."/>
            <person name="Wedler E."/>
            <person name="Wedler H."/>
            <person name="Weitzenegger T."/>
            <person name="Winters P."/>
            <person name="Wipat A."/>
            <person name="Yamamoto H."/>
            <person name="Yamane K."/>
            <person name="Yasumoto K."/>
            <person name="Yata K."/>
            <person name="Yoshida K."/>
            <person name="Yoshikawa H.-F."/>
            <person name="Zumstein E."/>
            <person name="Yoshikawa H."/>
            <person name="Danchin A."/>
        </authorList>
    </citation>
    <scope>NUCLEOTIDE SEQUENCE [LARGE SCALE GENOMIC DNA]</scope>
    <source>
        <strain>168</strain>
    </source>
</reference>
<reference key="3">
    <citation type="journal article" date="2002" name="Mol. Microbiol.">
        <title>Antibiotics that inhibit cell wall biosynthesis induce expression of the Bacillus subtilis sigma(W) and sigma(M) regulons.</title>
        <authorList>
            <person name="Cao M."/>
            <person name="Wang T."/>
            <person name="Ye R."/>
            <person name="Helmann J.D."/>
        </authorList>
    </citation>
    <scope>INDUCTION BY VANCOMYCIN</scope>
    <source>
        <strain>168 / CU1065</strain>
    </source>
</reference>
<reference key="4">
    <citation type="journal article" date="2003" name="Mol. Microbiol.">
        <title>Cell wall stress responses in Bacillus subtilis: the regulatory network of the bacitracin stimulon.</title>
        <authorList>
            <person name="Mascher T."/>
            <person name="Margulis N.G."/>
            <person name="Wang T."/>
            <person name="Ye R.W."/>
            <person name="Helmann J.D."/>
        </authorList>
    </citation>
    <scope>INDUCTION BY BACITRACIN</scope>
    <source>
        <strain>168 / CU1065</strain>
    </source>
</reference>
<reference key="5">
    <citation type="journal article" date="2004" name="Antimicrob. Agents Chemother.">
        <title>Antibiotic-inducible promoter regulated by the cell envelope stress-sensing two-component system LiaRS of Bacillus subtilis.</title>
        <authorList>
            <person name="Mascher T."/>
            <person name="Zimmer S.L."/>
            <person name="Smith T.-A."/>
            <person name="Helmann J.D."/>
        </authorList>
    </citation>
    <scope>INDUCTION BY ANTIBIOTICS</scope>
</reference>
<reference key="6">
    <citation type="journal article" date="2005" name="Appl. Microbiol. Biotechnol.">
        <title>Transcriptome analysis of the secretion stress response of Bacillus subtilis.</title>
        <authorList>
            <person name="Hyyrylaeinen H.-L."/>
            <person name="Sarvas M."/>
            <person name="Kontinen V.P."/>
        </authorList>
    </citation>
    <scope>INDUCTION BY STRESS</scope>
</reference>
<reference key="7">
    <citation type="journal article" date="2005" name="Microbiology">
        <title>Cationic antimicrobial peptides elicit a complex stress response in Bacillus subtilis that involves ECF-type sigma factors and two-component signal transduction systems.</title>
        <authorList>
            <person name="Pietiaeinen M."/>
            <person name="Gardemeister M."/>
            <person name="Mecklin M."/>
            <person name="Leskelae S."/>
            <person name="Sarvas M."/>
            <person name="Kontinen V.P."/>
        </authorList>
    </citation>
    <scope>INDUCTION BY LL-37; PG-1 AND TRITON X-100</scope>
    <source>
        <strain>168</strain>
    </source>
</reference>
<reference key="8">
    <citation type="journal article" date="2007" name="J. Bacteriol.">
        <title>The yydFGHIJ operon of Bacillus subtilis encodes a peptide that induces the LiaRS two-component system.</title>
        <authorList>
            <person name="Butcher B.G."/>
            <person name="Lin Y.-P."/>
            <person name="Helmann J.D."/>
        </authorList>
    </citation>
    <scope>DISRUPTION PHENOTYPE</scope>
    <source>
        <strain>168</strain>
    </source>
</reference>
<accession>O32199</accession>
<accession>Q7B2J5</accession>
<dbReference type="EMBL" id="AJ223978">
    <property type="protein sequence ID" value="CAA11743.1"/>
    <property type="molecule type" value="Genomic_DNA"/>
</dbReference>
<dbReference type="EMBL" id="AL009126">
    <property type="protein sequence ID" value="CAB15300.1"/>
    <property type="molecule type" value="Genomic_DNA"/>
</dbReference>
<dbReference type="PIR" id="G70045">
    <property type="entry name" value="G70045"/>
</dbReference>
<dbReference type="RefSeq" id="NP_391190.1">
    <property type="nucleotide sequence ID" value="NC_000964.3"/>
</dbReference>
<dbReference type="RefSeq" id="WP_003242605.1">
    <property type="nucleotide sequence ID" value="NZ_OZ025638.1"/>
</dbReference>
<dbReference type="SMR" id="O32199"/>
<dbReference type="FunCoup" id="O32199">
    <property type="interactions" value="190"/>
</dbReference>
<dbReference type="STRING" id="224308.BSU33100"/>
<dbReference type="PaxDb" id="224308-BSU33100"/>
<dbReference type="EnsemblBacteria" id="CAB15300">
    <property type="protein sequence ID" value="CAB15300"/>
    <property type="gene ID" value="BSU_33100"/>
</dbReference>
<dbReference type="GeneID" id="938469"/>
<dbReference type="KEGG" id="bsu:BSU33100"/>
<dbReference type="PATRIC" id="fig|224308.179.peg.3588"/>
<dbReference type="eggNOG" id="COG4758">
    <property type="taxonomic scope" value="Bacteria"/>
</dbReference>
<dbReference type="InParanoid" id="O32199"/>
<dbReference type="OrthoDB" id="2351415at2"/>
<dbReference type="PhylomeDB" id="O32199"/>
<dbReference type="BioCyc" id="BSUB:BSU33100-MONOMER"/>
<dbReference type="Proteomes" id="UP000001570">
    <property type="component" value="Chromosome"/>
</dbReference>
<dbReference type="GO" id="GO:0005886">
    <property type="term" value="C:plasma membrane"/>
    <property type="evidence" value="ECO:0007669"/>
    <property type="project" value="UniProtKB-SubCell"/>
</dbReference>
<dbReference type="InterPro" id="IPR016975">
    <property type="entry name" value="Cell_wall_LiaF"/>
</dbReference>
<dbReference type="InterPro" id="IPR024425">
    <property type="entry name" value="LiaF-like_C"/>
</dbReference>
<dbReference type="InterPro" id="IPR047793">
    <property type="entry name" value="LiaF_C"/>
</dbReference>
<dbReference type="InterPro" id="IPR054331">
    <property type="entry name" value="LiaF_TM"/>
</dbReference>
<dbReference type="NCBIfam" id="NF040535">
    <property type="entry name" value="LiaF_C_term"/>
    <property type="match status" value="1"/>
</dbReference>
<dbReference type="Pfam" id="PF09922">
    <property type="entry name" value="LiaF-like_C"/>
    <property type="match status" value="1"/>
</dbReference>
<dbReference type="Pfam" id="PF22570">
    <property type="entry name" value="LiaF-TM"/>
    <property type="match status" value="1"/>
</dbReference>
<dbReference type="PIRSF" id="PIRSF031509">
    <property type="entry name" value="Cell_wall_LiaF/YvqF"/>
    <property type="match status" value="1"/>
</dbReference>
<organism>
    <name type="scientific">Bacillus subtilis (strain 168)</name>
    <dbReference type="NCBI Taxonomy" id="224308"/>
    <lineage>
        <taxon>Bacteria</taxon>
        <taxon>Bacillati</taxon>
        <taxon>Bacillota</taxon>
        <taxon>Bacilli</taxon>
        <taxon>Bacillales</taxon>
        <taxon>Bacillaceae</taxon>
        <taxon>Bacillus</taxon>
    </lineage>
</organism>
<comment type="subcellular location">
    <subcellularLocation>
        <location evidence="8">Cell membrane</location>
        <topology evidence="8">Multi-pass membrane protein</topology>
    </subcellularLocation>
</comment>
<comment type="induction">
    <text evidence="2 3 4 5 6">Induced, via the two-component regulatory system LiaS/LiaR, by antibiotics (vancomycin, bacitracin, nisin and ramoplanin), cationic antimicrobial peptides (human LL-37 and porcine PG-1), Triton X-100 and severe secretion stress.</text>
</comment>
<comment type="disruption phenotype">
    <text evidence="7">Up-regulates expression of liaI which in turn induces the liaRS two-component regulatory system.</text>
</comment>
<feature type="chain" id="PRO_0000084414" description="Protein LiaF">
    <location>
        <begin position="1"/>
        <end position="241"/>
    </location>
</feature>
<feature type="transmembrane region" description="Helical" evidence="1">
    <location>
        <begin position="6"/>
        <end position="26"/>
    </location>
</feature>
<feature type="transmembrane region" description="Helical" evidence="1">
    <location>
        <begin position="49"/>
        <end position="63"/>
    </location>
</feature>
<feature type="transmembrane region" description="Helical" evidence="1">
    <location>
        <begin position="66"/>
        <end position="86"/>
    </location>
</feature>
<evidence type="ECO:0000255" key="1"/>
<evidence type="ECO:0000269" key="2">
    <source>
    </source>
</evidence>
<evidence type="ECO:0000269" key="3">
    <source>
    </source>
</evidence>
<evidence type="ECO:0000269" key="4">
    <source>
    </source>
</evidence>
<evidence type="ECO:0000269" key="5">
    <source>
    </source>
</evidence>
<evidence type="ECO:0000269" key="6">
    <source>
    </source>
</evidence>
<evidence type="ECO:0000269" key="7">
    <source>
    </source>
</evidence>
<evidence type="ECO:0000305" key="8"/>
<proteinExistence type="evidence at transcript level"/>
<name>LIAF_BACSU</name>